<evidence type="ECO:0000250" key="1"/>
<evidence type="ECO:0000305" key="2"/>
<feature type="chain" id="PRO_0000188164" description="ATP synthase epsilon chain">
    <location>
        <begin position="1"/>
        <end position="133"/>
    </location>
</feature>
<keyword id="KW-0066">ATP synthesis</keyword>
<keyword id="KW-1003">Cell membrane</keyword>
<keyword id="KW-0139">CF(1)</keyword>
<keyword id="KW-0375">Hydrogen ion transport</keyword>
<keyword id="KW-0406">Ion transport</keyword>
<keyword id="KW-0472">Membrane</keyword>
<keyword id="KW-1185">Reference proteome</keyword>
<keyword id="KW-0813">Transport</keyword>
<dbReference type="EMBL" id="U43738">
    <property type="protein sequence ID" value="AAC43660.1"/>
    <property type="molecule type" value="Genomic_DNA"/>
</dbReference>
<dbReference type="EMBL" id="U00089">
    <property type="protein sequence ID" value="AAB95893.1"/>
    <property type="molecule type" value="Genomic_DNA"/>
</dbReference>
<dbReference type="PIR" id="S62850">
    <property type="entry name" value="S62850"/>
</dbReference>
<dbReference type="RefSeq" id="NP_110286.1">
    <property type="nucleotide sequence ID" value="NC_000912.1"/>
</dbReference>
<dbReference type="RefSeq" id="WP_010874954.1">
    <property type="nucleotide sequence ID" value="NZ_OU342337.1"/>
</dbReference>
<dbReference type="SMR" id="Q50332"/>
<dbReference type="STRING" id="272634.MPN_597"/>
<dbReference type="EnsemblBacteria" id="AAB95893">
    <property type="protein sequence ID" value="AAB95893"/>
    <property type="gene ID" value="MPN_597"/>
</dbReference>
<dbReference type="KEGG" id="mpn:MPN_597"/>
<dbReference type="PATRIC" id="fig|272634.6.peg.660"/>
<dbReference type="HOGENOM" id="CLU_1904395_0_0_14"/>
<dbReference type="OrthoDB" id="389606at2"/>
<dbReference type="BioCyc" id="MetaCyc:MONOMER-542"/>
<dbReference type="BioCyc" id="MPNE272634:G1GJ3-972-MONOMER"/>
<dbReference type="Proteomes" id="UP000000808">
    <property type="component" value="Chromosome"/>
</dbReference>
<dbReference type="GO" id="GO:0005886">
    <property type="term" value="C:plasma membrane"/>
    <property type="evidence" value="ECO:0007669"/>
    <property type="project" value="UniProtKB-SubCell"/>
</dbReference>
<dbReference type="GO" id="GO:0045259">
    <property type="term" value="C:proton-transporting ATP synthase complex"/>
    <property type="evidence" value="ECO:0007669"/>
    <property type="project" value="UniProtKB-KW"/>
</dbReference>
<dbReference type="GO" id="GO:0005524">
    <property type="term" value="F:ATP binding"/>
    <property type="evidence" value="ECO:0007669"/>
    <property type="project" value="UniProtKB-UniRule"/>
</dbReference>
<dbReference type="GO" id="GO:0046933">
    <property type="term" value="F:proton-transporting ATP synthase activity, rotational mechanism"/>
    <property type="evidence" value="ECO:0007669"/>
    <property type="project" value="UniProtKB-UniRule"/>
</dbReference>
<dbReference type="Gene3D" id="2.60.15.10">
    <property type="entry name" value="F0F1 ATP synthase delta/epsilon subunit, N-terminal"/>
    <property type="match status" value="1"/>
</dbReference>
<dbReference type="HAMAP" id="MF_00530">
    <property type="entry name" value="ATP_synth_epsil_bac"/>
    <property type="match status" value="1"/>
</dbReference>
<dbReference type="InterPro" id="IPR001469">
    <property type="entry name" value="ATP_synth_F1_dsu/esu"/>
</dbReference>
<dbReference type="InterPro" id="IPR020546">
    <property type="entry name" value="ATP_synth_F1_dsu/esu_N"/>
</dbReference>
<dbReference type="InterPro" id="IPR036771">
    <property type="entry name" value="ATPsynth_dsu/esu_N"/>
</dbReference>
<dbReference type="NCBIfam" id="NF001812">
    <property type="entry name" value="PRK00539.1"/>
    <property type="match status" value="1"/>
</dbReference>
<dbReference type="Pfam" id="PF02823">
    <property type="entry name" value="ATP-synt_DE_N"/>
    <property type="match status" value="1"/>
</dbReference>
<dbReference type="SUPFAM" id="SSF51344">
    <property type="entry name" value="Epsilon subunit of F1F0-ATP synthase N-terminal domain"/>
    <property type="match status" value="1"/>
</dbReference>
<reference key="1">
    <citation type="journal article" date="1996" name="Nucleic Acids Res.">
        <title>Sequence analysis of 56 kb from the genome of the bacterium Mycoplasma pneumoniae comprising the dnaA region, the atp operon and a cluster of ribosomal protein genes.</title>
        <authorList>
            <person name="Hilbert H."/>
            <person name="Himmelreich R."/>
            <person name="Plagens H."/>
            <person name="Herrmann R."/>
        </authorList>
    </citation>
    <scope>NUCLEOTIDE SEQUENCE [GENOMIC DNA]</scope>
    <source>
        <strain>ATCC 29342 / M129 / Subtype 1</strain>
    </source>
</reference>
<reference key="2">
    <citation type="journal article" date="1996" name="Nucleic Acids Res.">
        <title>Complete sequence analysis of the genome of the bacterium Mycoplasma pneumoniae.</title>
        <authorList>
            <person name="Himmelreich R."/>
            <person name="Hilbert H."/>
            <person name="Plagens H."/>
            <person name="Pirkl E."/>
            <person name="Li B.-C."/>
            <person name="Herrmann R."/>
        </authorList>
    </citation>
    <scope>NUCLEOTIDE SEQUENCE [LARGE SCALE GENOMIC DNA]</scope>
    <source>
        <strain>ATCC 29342 / M129 / Subtype 1</strain>
    </source>
</reference>
<name>ATPE_MYCPN</name>
<comment type="function">
    <text evidence="1">Produces ATP from ADP in the presence of a proton gradient across the membrane.</text>
</comment>
<comment type="subunit">
    <text>F-type ATPases have 2 components, CF(1) - the catalytic core - and CF(0) - the membrane proton channel. CF(1) has five subunits: alpha(3), beta(3), gamma(1), delta(1), epsilon(1). CF(0) has three main subunits: a, b and c.</text>
</comment>
<comment type="subcellular location">
    <subcellularLocation>
        <location evidence="1">Cell membrane</location>
        <topology evidence="1">Peripheral membrane protein</topology>
    </subcellularLocation>
</comment>
<comment type="similarity">
    <text evidence="2">Belongs to the ATPase epsilon chain family.</text>
</comment>
<protein>
    <recommendedName>
        <fullName>ATP synthase epsilon chain</fullName>
    </recommendedName>
    <alternativeName>
        <fullName>ATP synthase F1 sector epsilon subunit</fullName>
    </alternativeName>
    <alternativeName>
        <fullName>F-ATPase epsilon subunit</fullName>
    </alternativeName>
</protein>
<organism>
    <name type="scientific">Mycoplasma pneumoniae (strain ATCC 29342 / M129 / Subtype 1)</name>
    <name type="common">Mycoplasmoides pneumoniae</name>
    <dbReference type="NCBI Taxonomy" id="272634"/>
    <lineage>
        <taxon>Bacteria</taxon>
        <taxon>Bacillati</taxon>
        <taxon>Mycoplasmatota</taxon>
        <taxon>Mycoplasmoidales</taxon>
        <taxon>Mycoplasmoidaceae</taxon>
        <taxon>Mycoplasmoides</taxon>
    </lineage>
</organism>
<sequence length="133" mass="15171">MQPLRFLVLSPSGIKLDQAIISAQVKTTNGYLGLNYNRAPLIAAVQSHFCKILFANNTRRNAIIGAGLVLIKKTEAKIFTENFVFEDEIDLEATLKRKAELERQMNHSKDLKLNIKIEQNLMFELLKLSNKQR</sequence>
<accession>Q50332</accession>
<proteinExistence type="inferred from homology"/>
<gene>
    <name type="primary">atpC</name>
    <name type="ordered locus">MPN_597</name>
    <name type="ORF">MP245</name>
</gene>